<name>ADDA_BACAH</name>
<gene>
    <name evidence="1" type="primary">addA</name>
    <name type="ordered locus">BALH_1006</name>
</gene>
<protein>
    <recommendedName>
        <fullName evidence="1">ATP-dependent helicase/nuclease subunit A</fullName>
        <ecNumber evidence="1">3.1.-.-</ecNumber>
        <ecNumber evidence="1">5.6.2.4</ecNumber>
    </recommendedName>
    <alternativeName>
        <fullName evidence="1">ATP-dependent helicase/nuclease AddA</fullName>
    </alternativeName>
    <alternativeName>
        <fullName evidence="1">DNA 3'-5' helicase AddA</fullName>
    </alternativeName>
</protein>
<reference key="1">
    <citation type="journal article" date="2007" name="J. Bacteriol.">
        <title>The complete genome sequence of Bacillus thuringiensis Al Hakam.</title>
        <authorList>
            <person name="Challacombe J.F."/>
            <person name="Altherr M.R."/>
            <person name="Xie G."/>
            <person name="Bhotika S.S."/>
            <person name="Brown N."/>
            <person name="Bruce D."/>
            <person name="Campbell C.S."/>
            <person name="Campbell M.L."/>
            <person name="Chen J."/>
            <person name="Chertkov O."/>
            <person name="Cleland C."/>
            <person name="Dimitrijevic M."/>
            <person name="Doggett N.A."/>
            <person name="Fawcett J.J."/>
            <person name="Glavina T."/>
            <person name="Goodwin L.A."/>
            <person name="Green L.D."/>
            <person name="Han C.S."/>
            <person name="Hill K.K."/>
            <person name="Hitchcock P."/>
            <person name="Jackson P.J."/>
            <person name="Keim P."/>
            <person name="Kewalramani A.R."/>
            <person name="Longmire J."/>
            <person name="Lucas S."/>
            <person name="Malfatti S."/>
            <person name="Martinez D."/>
            <person name="McMurry K."/>
            <person name="Meincke L.J."/>
            <person name="Misra M."/>
            <person name="Moseman B.L."/>
            <person name="Mundt M."/>
            <person name="Munk A.C."/>
            <person name="Okinaka R.T."/>
            <person name="Parson-Quintana B."/>
            <person name="Reilly L.P."/>
            <person name="Richardson P."/>
            <person name="Robinson D.L."/>
            <person name="Saunders E."/>
            <person name="Tapia R."/>
            <person name="Tesmer J.G."/>
            <person name="Thayer N."/>
            <person name="Thompson L.S."/>
            <person name="Tice H."/>
            <person name="Ticknor L.O."/>
            <person name="Wills P.L."/>
            <person name="Gilna P."/>
            <person name="Brettin T.S."/>
        </authorList>
    </citation>
    <scope>NUCLEOTIDE SEQUENCE [LARGE SCALE GENOMIC DNA]</scope>
    <source>
        <strain>Al Hakam</strain>
    </source>
</reference>
<dbReference type="EC" id="3.1.-.-" evidence="1"/>
<dbReference type="EC" id="5.6.2.4" evidence="1"/>
<dbReference type="EMBL" id="CP000485">
    <property type="protein sequence ID" value="ABK84370.1"/>
    <property type="molecule type" value="Genomic_DNA"/>
</dbReference>
<dbReference type="RefSeq" id="WP_000572292.1">
    <property type="nucleotide sequence ID" value="NC_008600.1"/>
</dbReference>
<dbReference type="SMR" id="A0RAX7"/>
<dbReference type="KEGG" id="btl:BALH_1006"/>
<dbReference type="HOGENOM" id="CLU_001114_3_1_9"/>
<dbReference type="GO" id="GO:0005829">
    <property type="term" value="C:cytosol"/>
    <property type="evidence" value="ECO:0007669"/>
    <property type="project" value="TreeGrafter"/>
</dbReference>
<dbReference type="GO" id="GO:0033202">
    <property type="term" value="C:DNA helicase complex"/>
    <property type="evidence" value="ECO:0007669"/>
    <property type="project" value="TreeGrafter"/>
</dbReference>
<dbReference type="GO" id="GO:0043138">
    <property type="term" value="F:3'-5' DNA helicase activity"/>
    <property type="evidence" value="ECO:0007669"/>
    <property type="project" value="UniProtKB-UniRule"/>
</dbReference>
<dbReference type="GO" id="GO:0008408">
    <property type="term" value="F:3'-5' exonuclease activity"/>
    <property type="evidence" value="ECO:0007669"/>
    <property type="project" value="UniProtKB-UniRule"/>
</dbReference>
<dbReference type="GO" id="GO:0005524">
    <property type="term" value="F:ATP binding"/>
    <property type="evidence" value="ECO:0007669"/>
    <property type="project" value="UniProtKB-UniRule"/>
</dbReference>
<dbReference type="GO" id="GO:0016887">
    <property type="term" value="F:ATP hydrolysis activity"/>
    <property type="evidence" value="ECO:0007669"/>
    <property type="project" value="RHEA"/>
</dbReference>
<dbReference type="GO" id="GO:0003690">
    <property type="term" value="F:double-stranded DNA binding"/>
    <property type="evidence" value="ECO:0007669"/>
    <property type="project" value="UniProtKB-UniRule"/>
</dbReference>
<dbReference type="GO" id="GO:0000724">
    <property type="term" value="P:double-strand break repair via homologous recombination"/>
    <property type="evidence" value="ECO:0007669"/>
    <property type="project" value="UniProtKB-UniRule"/>
</dbReference>
<dbReference type="CDD" id="cd18807">
    <property type="entry name" value="SF1_C_UvrD"/>
    <property type="match status" value="1"/>
</dbReference>
<dbReference type="FunFam" id="3.40.50.300:FF:001164">
    <property type="entry name" value="ATP-dependent helicase/nuclease subunit A"/>
    <property type="match status" value="1"/>
</dbReference>
<dbReference type="FunFam" id="3.40.50.300:FF:001187">
    <property type="entry name" value="ATP-dependent helicase/nuclease subunit A"/>
    <property type="match status" value="1"/>
</dbReference>
<dbReference type="FunFam" id="3.40.50.300:FF:001196">
    <property type="entry name" value="ATP-dependent helicase/nuclease subunit A"/>
    <property type="match status" value="1"/>
</dbReference>
<dbReference type="FunFam" id="3.40.50.300:FF:001236">
    <property type="entry name" value="ATP-dependent helicase/nuclease subunit A"/>
    <property type="match status" value="1"/>
</dbReference>
<dbReference type="FunFam" id="3.90.320.10:FF:000008">
    <property type="entry name" value="ATP-dependent helicase/nuclease subunit A"/>
    <property type="match status" value="1"/>
</dbReference>
<dbReference type="Gene3D" id="3.90.320.10">
    <property type="match status" value="1"/>
</dbReference>
<dbReference type="Gene3D" id="6.10.250.2380">
    <property type="match status" value="1"/>
</dbReference>
<dbReference type="Gene3D" id="3.40.50.300">
    <property type="entry name" value="P-loop containing nucleotide triphosphate hydrolases"/>
    <property type="match status" value="4"/>
</dbReference>
<dbReference type="HAMAP" id="MF_01451">
    <property type="entry name" value="AddA"/>
    <property type="match status" value="1"/>
</dbReference>
<dbReference type="InterPro" id="IPR014152">
    <property type="entry name" value="AddA"/>
</dbReference>
<dbReference type="InterPro" id="IPR014017">
    <property type="entry name" value="DNA_helicase_UvrD-like_C"/>
</dbReference>
<dbReference type="InterPro" id="IPR000212">
    <property type="entry name" value="DNA_helicase_UvrD/REP"/>
</dbReference>
<dbReference type="InterPro" id="IPR027417">
    <property type="entry name" value="P-loop_NTPase"/>
</dbReference>
<dbReference type="InterPro" id="IPR011604">
    <property type="entry name" value="PDDEXK-like_dom_sf"/>
</dbReference>
<dbReference type="InterPro" id="IPR038726">
    <property type="entry name" value="PDDEXK_AddAB-type"/>
</dbReference>
<dbReference type="InterPro" id="IPR011335">
    <property type="entry name" value="Restrct_endonuc-II-like"/>
</dbReference>
<dbReference type="InterPro" id="IPR014016">
    <property type="entry name" value="UvrD-like_ATP-bd"/>
</dbReference>
<dbReference type="NCBIfam" id="TIGR02785">
    <property type="entry name" value="addA_Gpos"/>
    <property type="match status" value="1"/>
</dbReference>
<dbReference type="PANTHER" id="PTHR11070:SF48">
    <property type="entry name" value="ATP-DEPENDENT HELICASE_NUCLEASE SUBUNIT A"/>
    <property type="match status" value="1"/>
</dbReference>
<dbReference type="PANTHER" id="PTHR11070">
    <property type="entry name" value="UVRD / RECB / PCRA DNA HELICASE FAMILY MEMBER"/>
    <property type="match status" value="1"/>
</dbReference>
<dbReference type="Pfam" id="PF12705">
    <property type="entry name" value="PDDEXK_1"/>
    <property type="match status" value="1"/>
</dbReference>
<dbReference type="Pfam" id="PF00580">
    <property type="entry name" value="UvrD-helicase"/>
    <property type="match status" value="1"/>
</dbReference>
<dbReference type="Pfam" id="PF13361">
    <property type="entry name" value="UvrD_C"/>
    <property type="match status" value="1"/>
</dbReference>
<dbReference type="SUPFAM" id="SSF52540">
    <property type="entry name" value="P-loop containing nucleoside triphosphate hydrolases"/>
    <property type="match status" value="1"/>
</dbReference>
<dbReference type="SUPFAM" id="SSF52980">
    <property type="entry name" value="Restriction endonuclease-like"/>
    <property type="match status" value="1"/>
</dbReference>
<dbReference type="PROSITE" id="PS51198">
    <property type="entry name" value="UVRD_HELICASE_ATP_BIND"/>
    <property type="match status" value="1"/>
</dbReference>
<dbReference type="PROSITE" id="PS51217">
    <property type="entry name" value="UVRD_HELICASE_CTER"/>
    <property type="match status" value="1"/>
</dbReference>
<keyword id="KW-0067">ATP-binding</keyword>
<keyword id="KW-0227">DNA damage</keyword>
<keyword id="KW-0234">DNA repair</keyword>
<keyword id="KW-0238">DNA-binding</keyword>
<keyword id="KW-0269">Exonuclease</keyword>
<keyword id="KW-0347">Helicase</keyword>
<keyword id="KW-0378">Hydrolase</keyword>
<keyword id="KW-0413">Isomerase</keyword>
<keyword id="KW-0540">Nuclease</keyword>
<keyword id="KW-0547">Nucleotide-binding</keyword>
<proteinExistence type="inferred from homology"/>
<comment type="function">
    <text evidence="1">The heterodimer acts as both an ATP-dependent DNA helicase and an ATP-dependent, dual-direction single-stranded exonuclease. Recognizes the chi site generating a DNA molecule suitable for the initiation of homologous recombination. The AddA nuclease domain is required for chi fragment generation; this subunit has the helicase and 3' -&gt; 5' nuclease activities.</text>
</comment>
<comment type="catalytic activity">
    <reaction evidence="1">
        <text>Couples ATP hydrolysis with the unwinding of duplex DNA by translocating in the 3'-5' direction.</text>
        <dbReference type="EC" id="5.6.2.4"/>
    </reaction>
</comment>
<comment type="catalytic activity">
    <reaction evidence="1">
        <text>ATP + H2O = ADP + phosphate + H(+)</text>
        <dbReference type="Rhea" id="RHEA:13065"/>
        <dbReference type="ChEBI" id="CHEBI:15377"/>
        <dbReference type="ChEBI" id="CHEBI:15378"/>
        <dbReference type="ChEBI" id="CHEBI:30616"/>
        <dbReference type="ChEBI" id="CHEBI:43474"/>
        <dbReference type="ChEBI" id="CHEBI:456216"/>
        <dbReference type="EC" id="5.6.2.4"/>
    </reaction>
</comment>
<comment type="cofactor">
    <cofactor evidence="1">
        <name>Mg(2+)</name>
        <dbReference type="ChEBI" id="CHEBI:18420"/>
    </cofactor>
</comment>
<comment type="subunit">
    <text evidence="1">Heterodimer of AddA and AddB/RexB.</text>
</comment>
<comment type="similarity">
    <text evidence="1">Belongs to the helicase family. AddA subfamily.</text>
</comment>
<organism>
    <name type="scientific">Bacillus thuringiensis (strain Al Hakam)</name>
    <dbReference type="NCBI Taxonomy" id="412694"/>
    <lineage>
        <taxon>Bacteria</taxon>
        <taxon>Bacillati</taxon>
        <taxon>Bacillota</taxon>
        <taxon>Bacilli</taxon>
        <taxon>Bacillales</taxon>
        <taxon>Bacillaceae</taxon>
        <taxon>Bacillus</taxon>
        <taxon>Bacillus cereus group</taxon>
    </lineage>
</organism>
<sequence length="1241" mass="142663">MIENWPKKPEGSQWTDDQWKAVVANGRDILVAAAAGSGKTAVLVERIIKKIINEENPVDVDRLLVVTFTNAAAQEMKNRIGEALEKVLIDEPGSQHVRKQLSLLNKASISTIHSFCLQVIRGYYYMLDVDPRFRIANQTENELLKEEVLDDILEEEYGIEDNTIFFELVDRYTSDRSDDDLQRMILALHTESRAHPNPEKWLDKLVEAYDVEGKTIEDLVYASYLLEDVKFQLETAEQHIRKATELAMLPDGPAPRIETLQADLALLGTLSSAARESWTSVYEAMQNVSWQTLKRIKKSDYNEDIVKQVDSLRNKAKDEVKKLQEELFSRRPESFLRDFQDMHPVLEKLVQLVKVFTERFQAMKRDKGMVDFTDLEHFCLQILSEQSEDGEMKPSAVALQYRNKFAEVLVDEYQDTNFVQESIIKFVTKDSESEGNLFMVGDVKQSIYRFRLAEPGLFLGKYKRFTQEGLGGGMKIDLAKNFRSRHEVLAGTNFIFKQIMGEEVGEIDYDADAELKLGASYPEGEDVAAELLCIQQTEEEVIDGEEGAEVEKAQLEARLMAQRIKAMVDSGYEVYDRKTDSMRPVQYRDFVILLRSMPWAPQIMEELKLQGIPVYADLATGYFEATEVNIMMNVFRVIDNPMQDIPLAAVLRSPIVGLNDEELATLRAHGKKGSFYEVMSSFLKGAPLEEEKELHDKLEWFYNLLQGWREFARQQSLSDLIWKVYGETGYYDFVGGLPAGKQRQANLRVLYDRARQYEATSFRGLFRFLRFIERILERGDDMGTARALGEQEDVVRIMTIHKSKGLEFPVVFVAGLGRRFNTQDLMKRFLLHKDFGFGSQFIDPRKRIKYTTLSQLAIKRKMKMELIAEEMRVLYVALTRAKEKLILIGTVKDATKEMEKWLDAREHSEWLLPDHVRAGASCYLDWIAPSLYRHRDSEMLLELGQGSIPDEIYGYDTSWKVEVVDGNTLLAPEPVQEEKQELLEALREKKAVPLQSERKDEVYDRLMWKYGYEEATSHRAKQSVTEIKRNYQSEEGSDNAFIKKLRAPIKTRPRFMEKKGLTYAERGTAVHAVMQHVDLKKPITVEVLQEQIAGMVNKELLTFEQAEEIAVEKVISFFDSDLGKRVLAAKSVEREVPFTMMLAAEEAYQDWQGESGESILVQGVIDCMIEEEDGITLIDFKTDTIEGKFPGGFEQAKPILETRYKVQLSLYAKALEKSLQHPVKEKCLYFFDGNHVIKVEE</sequence>
<accession>A0RAX7</accession>
<feature type="chain" id="PRO_0000379243" description="ATP-dependent helicase/nuclease subunit A">
    <location>
        <begin position="1"/>
        <end position="1241"/>
    </location>
</feature>
<feature type="domain" description="UvrD-like helicase ATP-binding" evidence="1">
    <location>
        <begin position="12"/>
        <end position="485"/>
    </location>
</feature>
<feature type="domain" description="UvrD-like helicase C-terminal" evidence="1">
    <location>
        <begin position="505"/>
        <end position="805"/>
    </location>
</feature>
<feature type="binding site" evidence="1">
    <location>
        <begin position="33"/>
        <end position="40"/>
    </location>
    <ligand>
        <name>ATP</name>
        <dbReference type="ChEBI" id="CHEBI:30616"/>
    </ligand>
</feature>
<evidence type="ECO:0000255" key="1">
    <source>
        <dbReference type="HAMAP-Rule" id="MF_01451"/>
    </source>
</evidence>